<accession>Q7F2E4</accession>
<accession>A0A0N7KC63</accession>
<accession>Q655K6</accession>
<gene>
    <name evidence="8" type="primary">CSB</name>
    <name evidence="12" type="ordered locus">Os01g0102800</name>
    <name evidence="8" type="ordered locus">LOC_Os01g01312</name>
    <name evidence="9" type="ORF">P0402A09.26</name>
    <name evidence="10" type="ORF">P0455C04.20</name>
    <name evidence="11" type="ORF">P0672D08.47</name>
</gene>
<organism>
    <name type="scientific">Oryza sativa subsp. japonica</name>
    <name type="common">Rice</name>
    <dbReference type="NCBI Taxonomy" id="39947"/>
    <lineage>
        <taxon>Eukaryota</taxon>
        <taxon>Viridiplantae</taxon>
        <taxon>Streptophyta</taxon>
        <taxon>Embryophyta</taxon>
        <taxon>Tracheophyta</taxon>
        <taxon>Spermatophyta</taxon>
        <taxon>Magnoliopsida</taxon>
        <taxon>Liliopsida</taxon>
        <taxon>Poales</taxon>
        <taxon>Poaceae</taxon>
        <taxon>BOP clade</taxon>
        <taxon>Oryzoideae</taxon>
        <taxon>Oryzeae</taxon>
        <taxon>Oryzinae</taxon>
        <taxon>Oryza</taxon>
        <taxon>Oryza sativa</taxon>
    </lineage>
</organism>
<evidence type="ECO:0000250" key="1">
    <source>
        <dbReference type="UniProtKB" id="Q03468"/>
    </source>
</evidence>
<evidence type="ECO:0000255" key="2">
    <source>
        <dbReference type="PROSITE-ProRule" id="PRU00541"/>
    </source>
</evidence>
<evidence type="ECO:0000255" key="3">
    <source>
        <dbReference type="PROSITE-ProRule" id="PRU00542"/>
    </source>
</evidence>
<evidence type="ECO:0000256" key="4">
    <source>
        <dbReference type="SAM" id="MobiDB-lite"/>
    </source>
</evidence>
<evidence type="ECO:0000269" key="5">
    <source>
    </source>
</evidence>
<evidence type="ECO:0000269" key="6">
    <source>
    </source>
</evidence>
<evidence type="ECO:0000303" key="7">
    <source>
    </source>
</evidence>
<evidence type="ECO:0000305" key="8"/>
<evidence type="ECO:0000312" key="9">
    <source>
        <dbReference type="EMBL" id="BAB62641.1"/>
    </source>
</evidence>
<evidence type="ECO:0000312" key="10">
    <source>
        <dbReference type="EMBL" id="BAB92143.1"/>
    </source>
</evidence>
<evidence type="ECO:0000312" key="11">
    <source>
        <dbReference type="EMBL" id="BAD45511.1"/>
    </source>
</evidence>
<evidence type="ECO:0000312" key="12">
    <source>
        <dbReference type="EMBL" id="BAF03666.1"/>
    </source>
</evidence>
<sequence>MEDDDDDQRLLHSLGVTSADIHDIERRIISQATTDPADSSGPTINGGHQPDDALAKLHHKLRSVQIEIDAVASTIKGAKLKQPSGNKPHEHKGKDQPDHHGAGHLQQALAADRLTSLRKAKAQIQKEILQSHPSPSASNRKDKMLAMLVQDEPRHKKPPVGPKNIVKRPMKTVTYDDDNNFDAVLDGASAGFMETEREELIRKGLLTPFHKLKGFEKRVELPEPSHRQDDSAGQTEEAMEASRIARVAQSLKQIAQNRPATKLLDSESLPKLDAPAAPFQRLGKPLKRPVSPSSDEQEKKRPRNKTKRPLPGKKWRKANSIKESSLDDNDVGEAAVSVSDDDEDQVTEGSDELTDVTLEGGLRIPGTLYTQLFDYQKVGVQWLWELHCQRAGGIIGDEMGLGKTVQVLSFLGSLHNSGLYKPSIVVCPVTLLQQWRREASRWYPKFKVEILHDSANSSSKKSKRSSDSDSEASWDSDQEEAVTCSKPAKKWDDLISRVVSSGSGLLLTTYEQLRILGEKLLDIEWGYAVLDEGHRIRNPNAEITLVCKQLQTVHRIIMTGAPIQNKLSELWSLFDFVFPGKLGVLPVFEAEFSVPITVGGYANATPLQVSTAYRCAVVLRDLVMPYLLRRMKADVNAQLPKKTEHVLFCSLTTEQRATYRAFLASSEVEQIFDGNRNSLYGIDVLRKICNHPDLLEREHAAQNPDYGNPERSGKMKVVEQVLKVWKEQGHRVLLFTQTQQMLDIMENFLTACEYQYRRMDGLTPAKQRMALIDEFNNTDEIFIFILTTKVGGLGTNLTGANRIIIYDPDWNPSTDMQARERAWRIGQTRDVTVYRLITRGTIEEKVYHRQIYKHFLTNKVLKDPQQRRFFKARDMKDLFTLQDDDNNGSTETSNIFSQLSEDVNIGVPSDKQQDQLYAASATPTTSGTEPSSSRHGQGKEDHCPDQADEECNILKSLFDAQGIHSAINHDAIMNANDDQKLRLEAEATQVAQRAAEALRQSRMLRSHESFSVPTWTGRAGAAGAPSSVRRKFGSTLNTQLVNSSQPSETSNGRGQSLQVGALNGKALSSAELLARIRGTREGAASDALEHQLNLGSASNHTSSSSGNGRASSSSTRSMIVQPEVLIRQLCTFIQQHGGSASSTSITEHFKNRILSKDMLLFKNLLKEIATLQRGANGATWVLKPDYQ</sequence>
<feature type="chain" id="PRO_0000438216" description="DNA excision repair protein CSB">
    <location>
        <begin position="1"/>
        <end position="1187"/>
    </location>
</feature>
<feature type="domain" description="Helicase ATP-binding" evidence="2">
    <location>
        <begin position="384"/>
        <end position="580"/>
    </location>
</feature>
<feature type="domain" description="Helicase C-terminal" evidence="3">
    <location>
        <begin position="716"/>
        <end position="876"/>
    </location>
</feature>
<feature type="region of interest" description="Disordered" evidence="4">
    <location>
        <begin position="31"/>
        <end position="53"/>
    </location>
</feature>
<feature type="region of interest" description="Disordered" evidence="4">
    <location>
        <begin position="75"/>
        <end position="102"/>
    </location>
</feature>
<feature type="region of interest" description="Disordered" evidence="4">
    <location>
        <begin position="217"/>
        <end position="242"/>
    </location>
</feature>
<feature type="region of interest" description="Disordered" evidence="4">
    <location>
        <begin position="265"/>
        <end position="351"/>
    </location>
</feature>
<feature type="region of interest" description="Disordered" evidence="4">
    <location>
        <begin position="457"/>
        <end position="480"/>
    </location>
</feature>
<feature type="region of interest" description="Disordered" evidence="4">
    <location>
        <begin position="916"/>
        <end position="945"/>
    </location>
</feature>
<feature type="region of interest" description="Disordered" evidence="4">
    <location>
        <begin position="1095"/>
        <end position="1116"/>
    </location>
</feature>
<feature type="short sequence motif" description="DEGH box" evidence="2">
    <location>
        <begin position="531"/>
        <end position="534"/>
    </location>
</feature>
<feature type="compositionally biased region" description="Polar residues" evidence="4">
    <location>
        <begin position="31"/>
        <end position="43"/>
    </location>
</feature>
<feature type="compositionally biased region" description="Basic and acidic residues" evidence="4">
    <location>
        <begin position="92"/>
        <end position="101"/>
    </location>
</feature>
<feature type="compositionally biased region" description="Basic and acidic residues" evidence="4">
    <location>
        <begin position="217"/>
        <end position="230"/>
    </location>
</feature>
<feature type="compositionally biased region" description="Basic residues" evidence="4">
    <location>
        <begin position="300"/>
        <end position="319"/>
    </location>
</feature>
<feature type="compositionally biased region" description="Acidic residues" evidence="4">
    <location>
        <begin position="339"/>
        <end position="351"/>
    </location>
</feature>
<feature type="compositionally biased region" description="Acidic residues" evidence="4">
    <location>
        <begin position="468"/>
        <end position="480"/>
    </location>
</feature>
<feature type="compositionally biased region" description="Low complexity" evidence="4">
    <location>
        <begin position="918"/>
        <end position="933"/>
    </location>
</feature>
<feature type="binding site" evidence="2">
    <location>
        <begin position="397"/>
        <end position="404"/>
    </location>
    <ligand>
        <name>ATP</name>
        <dbReference type="ChEBI" id="CHEBI:30616"/>
    </ligand>
</feature>
<comment type="function">
    <text evidence="1">Essential factor involved in transcription-coupled nucleotide excision repair (TCR) which allows RNA polymerase II-blocking lesions to be rapidly removed from the transcribed strand of active genes. Upon DNA-binding, it locally modifies DNA conformation by wrapping the DNA around itself, thereby modifying the interface between stalled RNA polymerase II and DNA. It is required for transcription-coupled repair complex formation.</text>
</comment>
<comment type="subunit">
    <text evidence="1">Homodimer. Binds DNA.</text>
</comment>
<comment type="subcellular location">
    <subcellularLocation>
        <location evidence="1">Nucleus</location>
    </subcellularLocation>
</comment>
<comment type="tissue specificity">
    <text evidence="5">Expressed in proliferating tissues. Highly expressed in shoot apical meristem (SAM). Expressed in roots, young leaves, flag leaves, and panicles. Expressed at very low levels in mature leaves.</text>
</comment>
<comment type="induction">
    <text evidence="6">Induced by gamma irradiation.</text>
</comment>
<comment type="similarity">
    <text evidence="8">Belongs to the SNF2/RAD54 helicase family.</text>
</comment>
<comment type="sequence caution" evidence="8">
    <conflict type="erroneous gene model prediction">
        <sequence resource="EMBL-CDS" id="BAD45511"/>
    </conflict>
</comment>
<comment type="sequence caution" evidence="8">
    <conflict type="erroneous gene model prediction">
        <sequence resource="EMBL-CDS" id="BAS69937"/>
    </conflict>
</comment>
<name>CSB_ORYSJ</name>
<protein>
    <recommendedName>
        <fullName evidence="8">DNA excision repair protein CSB</fullName>
        <ecNumber evidence="8">3.6.4.-</ecNumber>
    </recommendedName>
    <alternativeName>
        <fullName evidence="8">Cockayne syndrome protein CSB</fullName>
        <shortName evidence="7">OsCSB</shortName>
    </alternativeName>
</protein>
<dbReference type="EC" id="3.6.4.-" evidence="8"/>
<dbReference type="EMBL" id="AB111944">
    <property type="protein sequence ID" value="BAD04853.1"/>
    <property type="molecule type" value="mRNA"/>
</dbReference>
<dbReference type="EMBL" id="AP002969">
    <property type="protein sequence ID" value="BAB92143.1"/>
    <property type="molecule type" value="Genomic_DNA"/>
</dbReference>
<dbReference type="EMBL" id="AP003610">
    <property type="protein sequence ID" value="BAB62641.1"/>
    <property type="molecule type" value="Genomic_DNA"/>
</dbReference>
<dbReference type="EMBL" id="AP003727">
    <property type="protein sequence ID" value="BAD45511.1"/>
    <property type="status" value="ALT_SEQ"/>
    <property type="molecule type" value="Genomic_DNA"/>
</dbReference>
<dbReference type="EMBL" id="AP008207">
    <property type="protein sequence ID" value="BAF03666.1"/>
    <property type="molecule type" value="Genomic_DNA"/>
</dbReference>
<dbReference type="EMBL" id="AP014957">
    <property type="protein sequence ID" value="BAS69937.1"/>
    <property type="status" value="ALT_SEQ"/>
    <property type="molecule type" value="Genomic_DNA"/>
</dbReference>
<dbReference type="RefSeq" id="NP_001384882.1">
    <property type="nucleotide sequence ID" value="NM_001397953.1"/>
</dbReference>
<dbReference type="RefSeq" id="XP_015621784.1">
    <property type="nucleotide sequence ID" value="XM_015766298.1"/>
</dbReference>
<dbReference type="SMR" id="Q7F2E4"/>
<dbReference type="FunCoup" id="Q7F2E4">
    <property type="interactions" value="1488"/>
</dbReference>
<dbReference type="STRING" id="39947.Q7F2E4"/>
<dbReference type="PaxDb" id="39947-Q7F2E4"/>
<dbReference type="GeneID" id="4326441"/>
<dbReference type="KEGG" id="dosa:Os01g0102800"/>
<dbReference type="eggNOG" id="KOG0387">
    <property type="taxonomic scope" value="Eukaryota"/>
</dbReference>
<dbReference type="HOGENOM" id="CLU_000315_7_0_1"/>
<dbReference type="InParanoid" id="Q7F2E4"/>
<dbReference type="OrthoDB" id="413460at2759"/>
<dbReference type="Proteomes" id="UP000000763">
    <property type="component" value="Chromosome 1"/>
</dbReference>
<dbReference type="Proteomes" id="UP000059680">
    <property type="component" value="Chromosome 1"/>
</dbReference>
<dbReference type="GO" id="GO:0005634">
    <property type="term" value="C:nucleus"/>
    <property type="evidence" value="ECO:0000318"/>
    <property type="project" value="GO_Central"/>
</dbReference>
<dbReference type="GO" id="GO:0005524">
    <property type="term" value="F:ATP binding"/>
    <property type="evidence" value="ECO:0007669"/>
    <property type="project" value="UniProtKB-KW"/>
</dbReference>
<dbReference type="GO" id="GO:0140658">
    <property type="term" value="F:ATP-dependent chromatin remodeler activity"/>
    <property type="evidence" value="ECO:0000318"/>
    <property type="project" value="GO_Central"/>
</dbReference>
<dbReference type="GO" id="GO:0003677">
    <property type="term" value="F:DNA binding"/>
    <property type="evidence" value="ECO:0007669"/>
    <property type="project" value="UniProtKB-KW"/>
</dbReference>
<dbReference type="GO" id="GO:0004386">
    <property type="term" value="F:helicase activity"/>
    <property type="evidence" value="ECO:0007669"/>
    <property type="project" value="UniProtKB-KW"/>
</dbReference>
<dbReference type="GO" id="GO:0016787">
    <property type="term" value="F:hydrolase activity"/>
    <property type="evidence" value="ECO:0007669"/>
    <property type="project" value="UniProtKB-KW"/>
</dbReference>
<dbReference type="GO" id="GO:0006283">
    <property type="term" value="P:transcription-coupled nucleotide-excision repair"/>
    <property type="evidence" value="ECO:0000318"/>
    <property type="project" value="GO_Central"/>
</dbReference>
<dbReference type="CDD" id="cd22254">
    <property type="entry name" value="CSB_WHD"/>
    <property type="match status" value="1"/>
</dbReference>
<dbReference type="CDD" id="cd18000">
    <property type="entry name" value="DEXHc_ERCC6"/>
    <property type="match status" value="1"/>
</dbReference>
<dbReference type="CDD" id="cd18793">
    <property type="entry name" value="SF2_C_SNF"/>
    <property type="match status" value="1"/>
</dbReference>
<dbReference type="FunFam" id="3.40.50.300:FF:000863">
    <property type="entry name" value="DNA excision repair protein ERCC-6"/>
    <property type="match status" value="1"/>
</dbReference>
<dbReference type="FunFam" id="3.40.50.10810:FF:000034">
    <property type="entry name" value="Protein CHROMATIN REMODELING 8"/>
    <property type="match status" value="1"/>
</dbReference>
<dbReference type="Gene3D" id="3.40.50.300">
    <property type="entry name" value="P-loop containing nucleotide triphosphate hydrolases"/>
    <property type="match status" value="1"/>
</dbReference>
<dbReference type="Gene3D" id="3.40.50.10810">
    <property type="entry name" value="Tandem AAA-ATPase domain"/>
    <property type="match status" value="1"/>
</dbReference>
<dbReference type="InterPro" id="IPR014001">
    <property type="entry name" value="Helicase_ATP-bd"/>
</dbReference>
<dbReference type="InterPro" id="IPR001650">
    <property type="entry name" value="Helicase_C-like"/>
</dbReference>
<dbReference type="InterPro" id="IPR027417">
    <property type="entry name" value="P-loop_NTPase"/>
</dbReference>
<dbReference type="InterPro" id="IPR038718">
    <property type="entry name" value="SNF2-like_sf"/>
</dbReference>
<dbReference type="InterPro" id="IPR049730">
    <property type="entry name" value="SNF2/RAD54-like_C"/>
</dbReference>
<dbReference type="InterPro" id="IPR000330">
    <property type="entry name" value="SNF2_N"/>
</dbReference>
<dbReference type="InterPro" id="IPR050496">
    <property type="entry name" value="SNF2_RAD54_helicase_repair"/>
</dbReference>
<dbReference type="PANTHER" id="PTHR45629:SF7">
    <property type="entry name" value="DNA EXCISION REPAIR PROTEIN ERCC-6-RELATED"/>
    <property type="match status" value="1"/>
</dbReference>
<dbReference type="PANTHER" id="PTHR45629">
    <property type="entry name" value="SNF2/RAD54 FAMILY MEMBER"/>
    <property type="match status" value="1"/>
</dbReference>
<dbReference type="Pfam" id="PF00271">
    <property type="entry name" value="Helicase_C"/>
    <property type="match status" value="1"/>
</dbReference>
<dbReference type="Pfam" id="PF00176">
    <property type="entry name" value="SNF2-rel_dom"/>
    <property type="match status" value="1"/>
</dbReference>
<dbReference type="SMART" id="SM00487">
    <property type="entry name" value="DEXDc"/>
    <property type="match status" value="1"/>
</dbReference>
<dbReference type="SMART" id="SM00490">
    <property type="entry name" value="HELICc"/>
    <property type="match status" value="1"/>
</dbReference>
<dbReference type="SUPFAM" id="SSF52540">
    <property type="entry name" value="P-loop containing nucleoside triphosphate hydrolases"/>
    <property type="match status" value="2"/>
</dbReference>
<dbReference type="PROSITE" id="PS51192">
    <property type="entry name" value="HELICASE_ATP_BIND_1"/>
    <property type="match status" value="1"/>
</dbReference>
<dbReference type="PROSITE" id="PS51194">
    <property type="entry name" value="HELICASE_CTER"/>
    <property type="match status" value="1"/>
</dbReference>
<proteinExistence type="evidence at transcript level"/>
<reference key="1">
    <citation type="journal article" date="2004" name="Nucleic Acids Res.">
        <title>DNA repair in higher plants; photoreactivation is the major DNA repair pathway in non-proliferating cells while excision repair (nucleotide excision repair and base excision repair) is active in proliferating cells.</title>
        <authorList>
            <person name="Kimura S."/>
            <person name="Tahira Y."/>
            <person name="Ishibashi T."/>
            <person name="Mori Y."/>
            <person name="Mori T."/>
            <person name="Hashimoto J."/>
            <person name="Sakaguchi K."/>
        </authorList>
    </citation>
    <scope>NUCLEOTIDE SEQUENCE [MRNA]</scope>
    <scope>TISSUE SPECIFICITY</scope>
</reference>
<reference key="2">
    <citation type="journal article" date="2002" name="Nature">
        <title>The genome sequence and structure of rice chromosome 1.</title>
        <authorList>
            <person name="Sasaki T."/>
            <person name="Matsumoto T."/>
            <person name="Yamamoto K."/>
            <person name="Sakata K."/>
            <person name="Baba T."/>
            <person name="Katayose Y."/>
            <person name="Wu J."/>
            <person name="Niimura Y."/>
            <person name="Cheng Z."/>
            <person name="Nagamura Y."/>
            <person name="Antonio B.A."/>
            <person name="Kanamori H."/>
            <person name="Hosokawa S."/>
            <person name="Masukawa M."/>
            <person name="Arikawa K."/>
            <person name="Chiden Y."/>
            <person name="Hayashi M."/>
            <person name="Okamoto M."/>
            <person name="Ando T."/>
            <person name="Aoki H."/>
            <person name="Arita K."/>
            <person name="Hamada M."/>
            <person name="Harada C."/>
            <person name="Hijishita S."/>
            <person name="Honda M."/>
            <person name="Ichikawa Y."/>
            <person name="Idonuma A."/>
            <person name="Iijima M."/>
            <person name="Ikeda M."/>
            <person name="Ikeno M."/>
            <person name="Ito S."/>
            <person name="Ito T."/>
            <person name="Ito Y."/>
            <person name="Ito Y."/>
            <person name="Iwabuchi A."/>
            <person name="Kamiya K."/>
            <person name="Karasawa W."/>
            <person name="Katagiri S."/>
            <person name="Kikuta A."/>
            <person name="Kobayashi N."/>
            <person name="Kono I."/>
            <person name="Machita K."/>
            <person name="Maehara T."/>
            <person name="Mizuno H."/>
            <person name="Mizubayashi T."/>
            <person name="Mukai Y."/>
            <person name="Nagasaki H."/>
            <person name="Nakashima M."/>
            <person name="Nakama Y."/>
            <person name="Nakamichi Y."/>
            <person name="Nakamura M."/>
            <person name="Namiki N."/>
            <person name="Negishi M."/>
            <person name="Ohta I."/>
            <person name="Ono N."/>
            <person name="Saji S."/>
            <person name="Sakai K."/>
            <person name="Shibata M."/>
            <person name="Shimokawa T."/>
            <person name="Shomura A."/>
            <person name="Song J."/>
            <person name="Takazaki Y."/>
            <person name="Terasawa K."/>
            <person name="Tsuji K."/>
            <person name="Waki K."/>
            <person name="Yamagata H."/>
            <person name="Yamane H."/>
            <person name="Yoshiki S."/>
            <person name="Yoshihara R."/>
            <person name="Yukawa K."/>
            <person name="Zhong H."/>
            <person name="Iwama H."/>
            <person name="Endo T."/>
            <person name="Ito H."/>
            <person name="Hahn J.H."/>
            <person name="Kim H.-I."/>
            <person name="Eun M.-Y."/>
            <person name="Yano M."/>
            <person name="Jiang J."/>
            <person name="Gojobori T."/>
        </authorList>
    </citation>
    <scope>NUCLEOTIDE SEQUENCE [LARGE SCALE GENOMIC DNA]</scope>
    <source>
        <strain>cv. Nipponbare</strain>
    </source>
</reference>
<reference key="3">
    <citation type="journal article" date="2005" name="Nature">
        <title>The map-based sequence of the rice genome.</title>
        <authorList>
            <consortium name="International rice genome sequencing project (IRGSP)"/>
        </authorList>
    </citation>
    <scope>NUCLEOTIDE SEQUENCE [LARGE SCALE GENOMIC DNA]</scope>
    <source>
        <strain>cv. Nipponbare</strain>
    </source>
</reference>
<reference key="4">
    <citation type="journal article" date="2008" name="Nucleic Acids Res.">
        <title>The rice annotation project database (RAP-DB): 2008 update.</title>
        <authorList>
            <consortium name="The rice annotation project (RAP)"/>
        </authorList>
    </citation>
    <scope>GENOME REANNOTATION</scope>
    <source>
        <strain>cv. Nipponbare</strain>
    </source>
</reference>
<reference key="5">
    <citation type="journal article" date="2013" name="Rice">
        <title>Improvement of the Oryza sativa Nipponbare reference genome using next generation sequence and optical map data.</title>
        <authorList>
            <person name="Kawahara Y."/>
            <person name="de la Bastide M."/>
            <person name="Hamilton J.P."/>
            <person name="Kanamori H."/>
            <person name="McCombie W.R."/>
            <person name="Ouyang S."/>
            <person name="Schwartz D.C."/>
            <person name="Tanaka T."/>
            <person name="Wu J."/>
            <person name="Zhou S."/>
            <person name="Childs K.L."/>
            <person name="Davidson R.M."/>
            <person name="Lin H."/>
            <person name="Quesada-Ocampo L."/>
            <person name="Vaillancourt B."/>
            <person name="Sakai H."/>
            <person name="Lee S.S."/>
            <person name="Kim J."/>
            <person name="Numa H."/>
            <person name="Itoh T."/>
            <person name="Buell C.R."/>
            <person name="Matsumoto T."/>
        </authorList>
    </citation>
    <scope>GENOME REANNOTATION</scope>
    <source>
        <strain>cv. Nipponbare</strain>
    </source>
</reference>
<reference key="6">
    <citation type="journal article" date="2014" name="J. Hered.">
        <title>Unraveling low-level gamma radiation--responsive changes in expression of early and late genes in leaves of rice seedlings at Iitate Village, Fukushima.</title>
        <authorList>
            <person name="Hayashi G."/>
            <person name="Shibato J."/>
            <person name="Imanaka T."/>
            <person name="Cho K."/>
            <person name="Kubo A."/>
            <person name="Kikuchi S."/>
            <person name="Satoh K."/>
            <person name="Kimura S."/>
            <person name="Ozawa S."/>
            <person name="Fukutani S."/>
            <person name="Endo S."/>
            <person name="Ichikawa K."/>
            <person name="Agrawal G.K."/>
            <person name="Shioda S."/>
            <person name="Fukumoto M."/>
            <person name="Rakwal R."/>
        </authorList>
    </citation>
    <scope>INDUCTION BY GAMMA IRRADIATION</scope>
</reference>
<keyword id="KW-0067">ATP-binding</keyword>
<keyword id="KW-0227">DNA damage</keyword>
<keyword id="KW-0234">DNA repair</keyword>
<keyword id="KW-0238">DNA-binding</keyword>
<keyword id="KW-0347">Helicase</keyword>
<keyword id="KW-0378">Hydrolase</keyword>
<keyword id="KW-0547">Nucleotide-binding</keyword>
<keyword id="KW-0539">Nucleus</keyword>
<keyword id="KW-1185">Reference proteome</keyword>
<keyword id="KW-0804">Transcription</keyword>
<keyword id="KW-0805">Transcription regulation</keyword>